<gene>
    <name type="primary">ORF2</name>
</gene>
<sequence length="268" mass="30474">MEDFFNCLRSRGFERTDEPLPSDSRRIVVHGVGGSGKTSLIEAFAIANEWVRAYTLTSHERFDISGRGISQYKGQPIDEKLWTILDEYGQTDNPETLPPFNVLATDPYQAFRCQPLRAHFVSLRSYRVPHHIAQAITQYTGFPIEAAGTDLHEGKYTVGPWTDKLRQQILVEDGEIHYQLSRRQCPHKLITDAIGEQWPTVTVVFDRSISPESARPLRCLFYIAATRSSNELNIRTYVPTRTPGLIKASLPHTSCRLCCRPRDLPSEN</sequence>
<accession>B1PS77</accession>
<reference key="1">
    <citation type="submission" date="2008-03" db="EMBL/GenBank/DDBJ databases">
        <title>Molecular characterization of Lolium latent virus, proposed type member of a new genus in the family Flexiviridae.</title>
        <authorList>
            <person name="Vaira A.M.V."/>
            <person name="Maroon-Lango C.J."/>
            <person name="Hammond J."/>
        </authorList>
    </citation>
    <scope>NUCLEOTIDE SEQUENCE [GENOMIC RNA]</scope>
</reference>
<keyword id="KW-1035">Host cytoplasm</keyword>
<keyword id="KW-0945">Host-virus interaction</keyword>
<keyword id="KW-1090">Inhibition of host innate immune response by virus</keyword>
<keyword id="KW-1185">Reference proteome</keyword>
<keyword id="KW-0694">RNA-binding</keyword>
<keyword id="KW-0941">Suppressor of RNA silencing</keyword>
<keyword id="KW-0813">Transport</keyword>
<keyword id="KW-0899">Viral immunoevasion</keyword>
<keyword id="KW-0916">Viral movement protein</keyword>
<dbReference type="EMBL" id="EU489641">
    <property type="protein sequence ID" value="ACA53375.1"/>
    <property type="molecule type" value="Genomic_RNA"/>
</dbReference>
<dbReference type="RefSeq" id="YP_001718500.1">
    <property type="nucleotide sequence ID" value="NC_010434.1"/>
</dbReference>
<dbReference type="SMR" id="B1PS77"/>
<dbReference type="KEGG" id="vg:6000102"/>
<dbReference type="Proteomes" id="UP000008689">
    <property type="component" value="Segment"/>
</dbReference>
<dbReference type="GO" id="GO:0030430">
    <property type="term" value="C:host cell cytoplasm"/>
    <property type="evidence" value="ECO:0007669"/>
    <property type="project" value="UniProtKB-SubCell"/>
</dbReference>
<dbReference type="GO" id="GO:0005524">
    <property type="term" value="F:ATP binding"/>
    <property type="evidence" value="ECO:0007669"/>
    <property type="project" value="InterPro"/>
</dbReference>
<dbReference type="GO" id="GO:0003723">
    <property type="term" value="F:RNA binding"/>
    <property type="evidence" value="ECO:0007669"/>
    <property type="project" value="UniProtKB-KW"/>
</dbReference>
<dbReference type="GO" id="GO:0052170">
    <property type="term" value="P:symbiont-mediated suppression of host innate immune response"/>
    <property type="evidence" value="ECO:0007669"/>
    <property type="project" value="UniProtKB-KW"/>
</dbReference>
<dbReference type="GO" id="GO:0046740">
    <property type="term" value="P:transport of virus in host, cell to cell"/>
    <property type="evidence" value="ECO:0007669"/>
    <property type="project" value="UniProtKB-KW"/>
</dbReference>
<dbReference type="InterPro" id="IPR027351">
    <property type="entry name" value="(+)RNA_virus_helicase_core_dom"/>
</dbReference>
<dbReference type="InterPro" id="IPR027417">
    <property type="entry name" value="P-loop_NTPase"/>
</dbReference>
<dbReference type="Pfam" id="PF01443">
    <property type="entry name" value="Viral_helicase1"/>
    <property type="match status" value="1"/>
</dbReference>
<dbReference type="SUPFAM" id="SSF52540">
    <property type="entry name" value="P-loop containing nucleoside triphosphate hydrolases"/>
    <property type="match status" value="1"/>
</dbReference>
<dbReference type="PROSITE" id="PS51657">
    <property type="entry name" value="PSRV_HELICASE"/>
    <property type="match status" value="1"/>
</dbReference>
<feature type="chain" id="PRO_0000401074" description="Movement and silencing protein TGBp1">
    <location>
        <begin position="1"/>
        <end position="268"/>
    </location>
</feature>
<feature type="domain" description="(+)RNA virus helicase ATP-binding">
    <location>
        <begin position="1"/>
        <end position="138"/>
    </location>
</feature>
<feature type="domain" description="(+)RNA virus helicase C-terminal">
    <location>
        <begin position="139"/>
        <end position="268"/>
    </location>
</feature>
<organism>
    <name type="scientific">Lolium latent virus (isolate Lolium/USA/US1/-)</name>
    <name type="common">LoLV</name>
    <dbReference type="NCBI Taxonomy" id="686945"/>
    <lineage>
        <taxon>Viruses</taxon>
        <taxon>Riboviria</taxon>
        <taxon>Orthornavirae</taxon>
        <taxon>Kitrinoviricota</taxon>
        <taxon>Alsuviricetes</taxon>
        <taxon>Tymovirales</taxon>
        <taxon>Alphaflexiviridae</taxon>
        <taxon>Lolavirus</taxon>
        <taxon>Lolium latent virus</taxon>
    </lineage>
</organism>
<proteinExistence type="inferred from homology"/>
<protein>
    <recommendedName>
        <fullName>Movement and silencing protein TGBp1</fullName>
    </recommendedName>
    <alternativeName>
        <fullName>25 kDa protein</fullName>
    </alternativeName>
    <alternativeName>
        <fullName>Silencing suppressor P25</fullName>
    </alternativeName>
    <alternativeName>
        <fullName>Triple gene block 1 protein</fullName>
        <shortName>TGBp1</shortName>
    </alternativeName>
</protein>
<organismHost>
    <name type="scientific">Lolium multiflorum x Lolium perenne</name>
    <dbReference type="NCBI Taxonomy" id="480553"/>
</organismHost>
<comment type="function">
    <text evidence="1">Transports viral genome to neighboring plant cells directly through plasmosdesmata, without any budding. The movement protein allows efficient cell to cell propagation, by bypassing the host cell wall barrier. Increases plasmodesma size exclusion limit. Acts as a suppressor of RNA-mediated gene silencing, also known as post-transcriptional gene silencing (PTGS), a mechanism of plant viral defense that limits the accumulation of viral RNAs (By similarity).</text>
</comment>
<comment type="subunit">
    <text evidence="1">Homodimer and homooligomer. Interacts with capsid protein. Interacts with host AGO1; this interaction targets the host protein for degradation, thereby suppressing the antiviral RNA silencing (By similarity).</text>
</comment>
<comment type="subcellular location">
    <subcellularLocation>
        <location evidence="1">Host cytoplasm</location>
    </subcellularLocation>
</comment>
<comment type="miscellaneous">
    <text>TGBp1, TGBp2 and TGBp3 seem to act together for cell-to-cell propagation. TGBp1 is the main movement protein that physically cross the plasmodesma with the viral genome. TGBp2 and TGBp3 would facilitate TGBp1 function.</text>
</comment>
<comment type="similarity">
    <text evidence="2">Belongs to the Tymovirales TGBp1 protein family.</text>
</comment>
<evidence type="ECO:0000250" key="1"/>
<evidence type="ECO:0000305" key="2"/>
<name>TGB1_LOLV</name>